<evidence type="ECO:0000255" key="1">
    <source>
        <dbReference type="HAMAP-Rule" id="MF_00338"/>
    </source>
</evidence>
<feature type="chain" id="PRO_1000119981" description="UPF0145 protein BamMC406_5002">
    <location>
        <begin position="1"/>
        <end position="122"/>
    </location>
</feature>
<comment type="similarity">
    <text evidence="1">Belongs to the UPF0145 family.</text>
</comment>
<gene>
    <name type="ordered locus">BamMC406_5002</name>
</gene>
<protein>
    <recommendedName>
        <fullName evidence="1">UPF0145 protein BamMC406_5002</fullName>
    </recommendedName>
</protein>
<reference key="1">
    <citation type="submission" date="2008-04" db="EMBL/GenBank/DDBJ databases">
        <title>Complete sequence of chromosome 2 of Burkholderia ambifaria MC40-6.</title>
        <authorList>
            <person name="Copeland A."/>
            <person name="Lucas S."/>
            <person name="Lapidus A."/>
            <person name="Glavina del Rio T."/>
            <person name="Dalin E."/>
            <person name="Tice H."/>
            <person name="Pitluck S."/>
            <person name="Chain P."/>
            <person name="Malfatti S."/>
            <person name="Shin M."/>
            <person name="Vergez L."/>
            <person name="Lang D."/>
            <person name="Schmutz J."/>
            <person name="Larimer F."/>
            <person name="Land M."/>
            <person name="Hauser L."/>
            <person name="Kyrpides N."/>
            <person name="Lykidis A."/>
            <person name="Ramette A."/>
            <person name="Konstantinidis K."/>
            <person name="Tiedje J."/>
            <person name="Richardson P."/>
        </authorList>
    </citation>
    <scope>NUCLEOTIDE SEQUENCE [LARGE SCALE GENOMIC DNA]</scope>
    <source>
        <strain>MC40-6</strain>
    </source>
</reference>
<accession>B1YZP8</accession>
<organism>
    <name type="scientific">Burkholderia ambifaria (strain MC40-6)</name>
    <dbReference type="NCBI Taxonomy" id="398577"/>
    <lineage>
        <taxon>Bacteria</taxon>
        <taxon>Pseudomonadati</taxon>
        <taxon>Pseudomonadota</taxon>
        <taxon>Betaproteobacteria</taxon>
        <taxon>Burkholderiales</taxon>
        <taxon>Burkholderiaceae</taxon>
        <taxon>Burkholderia</taxon>
        <taxon>Burkholderia cepacia complex</taxon>
    </lineage>
</organism>
<name>Y5002_BURA4</name>
<proteinExistence type="inferred from homology"/>
<dbReference type="EMBL" id="CP001026">
    <property type="protein sequence ID" value="ACB67448.1"/>
    <property type="molecule type" value="Genomic_DNA"/>
</dbReference>
<dbReference type="RefSeq" id="WP_012366719.1">
    <property type="nucleotide sequence ID" value="NC_010552.1"/>
</dbReference>
<dbReference type="SMR" id="B1YZP8"/>
<dbReference type="KEGG" id="bac:BamMC406_5002"/>
<dbReference type="HOGENOM" id="CLU_117144_1_1_4"/>
<dbReference type="OrthoDB" id="9796448at2"/>
<dbReference type="Proteomes" id="UP000001680">
    <property type="component" value="Chromosome 2"/>
</dbReference>
<dbReference type="Gene3D" id="3.30.110.70">
    <property type="entry name" value="Hypothetical protein apc22750. Chain B"/>
    <property type="match status" value="1"/>
</dbReference>
<dbReference type="HAMAP" id="MF_00338">
    <property type="entry name" value="UPF0145"/>
    <property type="match status" value="1"/>
</dbReference>
<dbReference type="InterPro" id="IPR035439">
    <property type="entry name" value="UPF0145_dom_sf"/>
</dbReference>
<dbReference type="InterPro" id="IPR002765">
    <property type="entry name" value="UPF0145_YbjQ-like"/>
</dbReference>
<dbReference type="PANTHER" id="PTHR34068:SF2">
    <property type="entry name" value="UPF0145 PROTEIN SCO3412"/>
    <property type="match status" value="1"/>
</dbReference>
<dbReference type="PANTHER" id="PTHR34068">
    <property type="entry name" value="UPF0145 PROTEIN YBJQ"/>
    <property type="match status" value="1"/>
</dbReference>
<dbReference type="Pfam" id="PF01906">
    <property type="entry name" value="YbjQ_1"/>
    <property type="match status" value="1"/>
</dbReference>
<dbReference type="SUPFAM" id="SSF117782">
    <property type="entry name" value="YbjQ-like"/>
    <property type="match status" value="1"/>
</dbReference>
<sequence length="122" mass="12894">MNDFSRSISDLTPERVTTAFDLAGHTTARSLGVAQGIVVRSRSIVGSFGAALQTIFGGNITLYTSLCEKARQQAFDKMLADARKLGANAIVAMRYDSTEIGSGITEVICYGTAVQVTRNAGA</sequence>